<feature type="initiator methionine" description="Removed; by host" evidence="1">
    <location>
        <position position="1"/>
    </location>
</feature>
<feature type="chain" id="PRO_0000261251" description="Gag polyprotein">
    <location>
        <begin position="2"/>
        <end position="521"/>
    </location>
</feature>
<feature type="chain" id="PRO_0000246440" description="Matrix protein p17" evidence="1">
    <location>
        <begin position="2"/>
        <end position="130"/>
    </location>
</feature>
<feature type="chain" id="PRO_0000246441" description="Capsid protein p24" evidence="1">
    <location>
        <begin position="131"/>
        <end position="360"/>
    </location>
</feature>
<feature type="peptide" id="PRO_0000246442" description="Spacer peptide 1" evidence="1">
    <location>
        <begin position="361"/>
        <end position="377"/>
    </location>
</feature>
<feature type="chain" id="PRO_0000246443" description="Nucleocapsid protein p7" evidence="1">
    <location>
        <begin position="378"/>
        <end position="430"/>
    </location>
</feature>
<feature type="peptide" id="PRO_0000246444" description="Spacer peptide 2" evidence="1">
    <location>
        <begin position="431"/>
        <end position="444"/>
    </location>
</feature>
<feature type="chain" id="PRO_0000246445" description="p6-gag" evidence="1">
    <location>
        <begin position="445"/>
        <end position="521"/>
    </location>
</feature>
<feature type="zinc finger region" description="CCHC-type 1" evidence="9">
    <location>
        <begin position="388"/>
        <end position="405"/>
    </location>
</feature>
<feature type="zinc finger region" description="CCHC-type 2" evidence="9">
    <location>
        <begin position="409"/>
        <end position="426"/>
    </location>
</feature>
<feature type="region of interest" description="Interaction with Gp41" evidence="6">
    <location>
        <begin position="7"/>
        <end position="31"/>
    </location>
</feature>
<feature type="region of interest" description="Interaction with host CALM1" evidence="5">
    <location>
        <begin position="8"/>
        <end position="43"/>
    </location>
</feature>
<feature type="region of interest" description="Interaction with host AP3D1" evidence="7">
    <location>
        <begin position="12"/>
        <end position="19"/>
    </location>
</feature>
<feature type="region of interest" description="Interaction with membrane phosphatidylinositol 4,5-bisphosphate and RNA" evidence="6">
    <location>
        <begin position="14"/>
        <end position="33"/>
    </location>
</feature>
<feature type="region of interest" description="Interaction with membrane phosphatidylinositol 4,5-bisphosphate" evidence="6">
    <location>
        <begin position="73"/>
        <end position="77"/>
    </location>
</feature>
<feature type="region of interest" description="Disordered" evidence="10">
    <location>
        <begin position="105"/>
        <end position="130"/>
    </location>
</feature>
<feature type="region of interest" description="Interaction with host PPIA/CYPA and NUP153" evidence="6">
    <location>
        <begin position="186"/>
        <end position="223"/>
    </location>
</feature>
<feature type="region of interest" description="PPIA/CYPA-binding loop" evidence="5">
    <location>
        <begin position="214"/>
        <end position="221"/>
    </location>
</feature>
<feature type="region of interest" description="Dimerization/Multimerization of capsid protein p24" evidence="5">
    <location>
        <begin position="274"/>
        <end position="360"/>
    </location>
</feature>
<feature type="region of interest" description="Disordered" evidence="10">
    <location>
        <begin position="446"/>
        <end position="482"/>
    </location>
</feature>
<feature type="short sequence motif" description="Nuclear export signal" evidence="1">
    <location>
        <begin position="16"/>
        <end position="22"/>
    </location>
</feature>
<feature type="short sequence motif" description="Nuclear localization signal" evidence="1">
    <location>
        <begin position="26"/>
        <end position="32"/>
    </location>
</feature>
<feature type="short sequence motif" description="PTAP/PSAP motif">
    <location>
        <begin position="455"/>
        <end position="458"/>
    </location>
</feature>
<feature type="compositionally biased region" description="Basic and acidic residues" evidence="10">
    <location>
        <begin position="105"/>
        <end position="114"/>
    </location>
</feature>
<feature type="site" description="Cleavage; by viral protease" evidence="1">
    <location>
        <begin position="130"/>
        <end position="131"/>
    </location>
</feature>
<feature type="site" description="Cleavage; by viral protease" evidence="1">
    <location>
        <begin position="360"/>
        <end position="361"/>
    </location>
</feature>
<feature type="site" description="Cleavage; by viral protease" evidence="1">
    <location>
        <begin position="377"/>
        <end position="378"/>
    </location>
</feature>
<feature type="site" description="Cleavage; by viral protease" evidence="1">
    <location>
        <begin position="430"/>
        <end position="431"/>
    </location>
</feature>
<feature type="site" description="Cleavage; by viral protease" evidence="1">
    <location>
        <begin position="444"/>
        <end position="445"/>
    </location>
</feature>
<feature type="modified residue" description="Phosphoserine; by host MAPK1" evidence="6">
    <location>
        <position position="145"/>
    </location>
</feature>
<feature type="lipid moiety-binding region" description="N-myristoyl glycine; by host" evidence="1">
    <location>
        <position position="2"/>
    </location>
</feature>
<protein>
    <recommendedName>
        <fullName>Gag polyprotein</fullName>
    </recommendedName>
    <alternativeName>
        <fullName>Pr55Gag</fullName>
    </alternativeName>
    <component>
        <recommendedName>
            <fullName>Matrix protein p17</fullName>
            <shortName>MA</shortName>
        </recommendedName>
    </component>
    <component>
        <recommendedName>
            <fullName>Capsid protein p24</fullName>
            <shortName>CA</shortName>
        </recommendedName>
    </component>
    <component>
        <recommendedName>
            <fullName evidence="6">Spacer peptide 1</fullName>
            <shortName>SP1</shortName>
        </recommendedName>
        <alternativeName>
            <fullName>p2</fullName>
        </alternativeName>
    </component>
    <component>
        <recommendedName>
            <fullName>Nucleocapsid protein p7</fullName>
            <shortName>NC</shortName>
        </recommendedName>
    </component>
    <component>
        <recommendedName>
            <fullName evidence="6">Spacer peptide 2</fullName>
            <shortName>SP2</shortName>
        </recommendedName>
        <alternativeName>
            <fullName>p1</fullName>
        </alternativeName>
    </component>
    <component>
        <recommendedName>
            <fullName>p6-gag</fullName>
        </recommendedName>
    </component>
</protein>
<evidence type="ECO:0000250" key="1"/>
<evidence type="ECO:0000250" key="2">
    <source>
        <dbReference type="UniProtKB" id="P03347"/>
    </source>
</evidence>
<evidence type="ECO:0000250" key="3">
    <source>
        <dbReference type="UniProtKB" id="P03348"/>
    </source>
</evidence>
<evidence type="ECO:0000250" key="4">
    <source>
        <dbReference type="UniProtKB" id="P03349"/>
    </source>
</evidence>
<evidence type="ECO:0000250" key="5">
    <source>
        <dbReference type="UniProtKB" id="P04591"/>
    </source>
</evidence>
<evidence type="ECO:0000250" key="6">
    <source>
        <dbReference type="UniProtKB" id="P12493"/>
    </source>
</evidence>
<evidence type="ECO:0000250" key="7">
    <source>
        <dbReference type="UniProtKB" id="P12497"/>
    </source>
</evidence>
<evidence type="ECO:0000250" key="8">
    <source>
        <dbReference type="UniProtKB" id="P18095"/>
    </source>
</evidence>
<evidence type="ECO:0000255" key="9">
    <source>
        <dbReference type="PROSITE-ProRule" id="PRU00047"/>
    </source>
</evidence>
<evidence type="ECO:0000256" key="10">
    <source>
        <dbReference type="SAM" id="MobiDB-lite"/>
    </source>
</evidence>
<evidence type="ECO:0000305" key="11"/>
<reference key="1">
    <citation type="journal article" date="1993" name="J. Virol.">
        <title>Distinguishing features of an infectious molecular clone of the highly divergent and noncytopathic human immunodeficiency virus type 2 UC1 strain.</title>
        <authorList>
            <person name="Barnett S.W."/>
            <person name="Quiroga M."/>
            <person name="Werner A."/>
            <person name="Dina D."/>
            <person name="Levy J.A."/>
        </authorList>
    </citation>
    <scope>NUCLEOTIDE SEQUENCE [GENOMIC RNA]</scope>
</reference>
<dbReference type="EMBL" id="L07625">
    <property type="protein sequence ID" value="AAA43941.1"/>
    <property type="molecule type" value="Genomic_RNA"/>
</dbReference>
<dbReference type="SMR" id="Q76633"/>
<dbReference type="PRO" id="PR:Q76633"/>
<dbReference type="Proteomes" id="UP000007428">
    <property type="component" value="Segment"/>
</dbReference>
<dbReference type="GO" id="GO:0042025">
    <property type="term" value="C:host cell nucleus"/>
    <property type="evidence" value="ECO:0007669"/>
    <property type="project" value="UniProtKB-SubCell"/>
</dbReference>
<dbReference type="GO" id="GO:0020002">
    <property type="term" value="C:host cell plasma membrane"/>
    <property type="evidence" value="ECO:0007669"/>
    <property type="project" value="UniProtKB-SubCell"/>
</dbReference>
<dbReference type="GO" id="GO:0072494">
    <property type="term" value="C:host multivesicular body"/>
    <property type="evidence" value="ECO:0007669"/>
    <property type="project" value="UniProtKB-SubCell"/>
</dbReference>
<dbReference type="GO" id="GO:0016020">
    <property type="term" value="C:membrane"/>
    <property type="evidence" value="ECO:0007669"/>
    <property type="project" value="UniProtKB-KW"/>
</dbReference>
<dbReference type="GO" id="GO:0019013">
    <property type="term" value="C:viral nucleocapsid"/>
    <property type="evidence" value="ECO:0007669"/>
    <property type="project" value="UniProtKB-KW"/>
</dbReference>
<dbReference type="GO" id="GO:0055036">
    <property type="term" value="C:virion membrane"/>
    <property type="evidence" value="ECO:0007669"/>
    <property type="project" value="UniProtKB-SubCell"/>
</dbReference>
<dbReference type="GO" id="GO:0003723">
    <property type="term" value="F:RNA binding"/>
    <property type="evidence" value="ECO:0007669"/>
    <property type="project" value="UniProtKB-KW"/>
</dbReference>
<dbReference type="GO" id="GO:0005198">
    <property type="term" value="F:structural molecule activity"/>
    <property type="evidence" value="ECO:0007669"/>
    <property type="project" value="InterPro"/>
</dbReference>
<dbReference type="GO" id="GO:0008270">
    <property type="term" value="F:zinc ion binding"/>
    <property type="evidence" value="ECO:0007669"/>
    <property type="project" value="UniProtKB-KW"/>
</dbReference>
<dbReference type="GO" id="GO:0039702">
    <property type="term" value="P:viral budding via host ESCRT complex"/>
    <property type="evidence" value="ECO:0007669"/>
    <property type="project" value="UniProtKB-KW"/>
</dbReference>
<dbReference type="GO" id="GO:0075523">
    <property type="term" value="P:viral translational frameshifting"/>
    <property type="evidence" value="ECO:0007669"/>
    <property type="project" value="UniProtKB-KW"/>
</dbReference>
<dbReference type="Gene3D" id="1.10.1200.30">
    <property type="match status" value="1"/>
</dbReference>
<dbReference type="Gene3D" id="1.10.375.10">
    <property type="entry name" value="Human Immunodeficiency Virus Type 1 Capsid Protein"/>
    <property type="match status" value="1"/>
</dbReference>
<dbReference type="Gene3D" id="1.10.150.90">
    <property type="entry name" value="Immunodeficiency lentiviruses, gag gene matrix protein p17"/>
    <property type="match status" value="1"/>
</dbReference>
<dbReference type="Gene3D" id="1.20.5.760">
    <property type="entry name" value="Single helix bin"/>
    <property type="match status" value="1"/>
</dbReference>
<dbReference type="Gene3D" id="4.10.60.10">
    <property type="entry name" value="Zinc finger, CCHC-type"/>
    <property type="match status" value="1"/>
</dbReference>
<dbReference type="InterPro" id="IPR045345">
    <property type="entry name" value="Gag_p24_C"/>
</dbReference>
<dbReference type="InterPro" id="IPR000071">
    <property type="entry name" value="Lentvrl_matrix_N"/>
</dbReference>
<dbReference type="InterPro" id="IPR012344">
    <property type="entry name" value="Matrix_HIV/RSV_N"/>
</dbReference>
<dbReference type="InterPro" id="IPR050195">
    <property type="entry name" value="Primate_lentivir_Gag_pol-like"/>
</dbReference>
<dbReference type="InterPro" id="IPR008916">
    <property type="entry name" value="Retrov_capsid_C"/>
</dbReference>
<dbReference type="InterPro" id="IPR008919">
    <property type="entry name" value="Retrov_capsid_N"/>
</dbReference>
<dbReference type="InterPro" id="IPR010999">
    <property type="entry name" value="Retrovr_matrix"/>
</dbReference>
<dbReference type="InterPro" id="IPR001878">
    <property type="entry name" value="Znf_CCHC"/>
</dbReference>
<dbReference type="InterPro" id="IPR036875">
    <property type="entry name" value="Znf_CCHC_sf"/>
</dbReference>
<dbReference type="PANTHER" id="PTHR40389:SF4">
    <property type="match status" value="1"/>
</dbReference>
<dbReference type="PANTHER" id="PTHR40389">
    <property type="entry name" value="ENDOGENOUS RETROVIRUS GROUP K MEMBER 24 GAG POLYPROTEIN-RELATED"/>
    <property type="match status" value="1"/>
</dbReference>
<dbReference type="Pfam" id="PF00540">
    <property type="entry name" value="Gag_p17"/>
    <property type="match status" value="1"/>
</dbReference>
<dbReference type="Pfam" id="PF00607">
    <property type="entry name" value="Gag_p24"/>
    <property type="match status" value="1"/>
</dbReference>
<dbReference type="Pfam" id="PF19317">
    <property type="entry name" value="Gag_p24_C"/>
    <property type="match status" value="1"/>
</dbReference>
<dbReference type="Pfam" id="PF00098">
    <property type="entry name" value="zf-CCHC"/>
    <property type="match status" value="2"/>
</dbReference>
<dbReference type="PRINTS" id="PR00234">
    <property type="entry name" value="HIV1MATRIX"/>
</dbReference>
<dbReference type="SMART" id="SM00343">
    <property type="entry name" value="ZnF_C2HC"/>
    <property type="match status" value="2"/>
</dbReference>
<dbReference type="SUPFAM" id="SSF47836">
    <property type="entry name" value="Retroviral matrix proteins"/>
    <property type="match status" value="1"/>
</dbReference>
<dbReference type="SUPFAM" id="SSF47353">
    <property type="entry name" value="Retrovirus capsid dimerization domain-like"/>
    <property type="match status" value="1"/>
</dbReference>
<dbReference type="SUPFAM" id="SSF47943">
    <property type="entry name" value="Retrovirus capsid protein, N-terminal core domain"/>
    <property type="match status" value="1"/>
</dbReference>
<dbReference type="SUPFAM" id="SSF57756">
    <property type="entry name" value="Retrovirus zinc finger-like domains"/>
    <property type="match status" value="1"/>
</dbReference>
<dbReference type="PROSITE" id="PS50158">
    <property type="entry name" value="ZF_CCHC"/>
    <property type="match status" value="2"/>
</dbReference>
<accession>Q76633</accession>
<organismHost>
    <name type="scientific">Homo sapiens</name>
    <name type="common">Human</name>
    <dbReference type="NCBI Taxonomy" id="9606"/>
</organismHost>
<name>GAG_HV2UC</name>
<organism>
    <name type="scientific">Human immunodeficiency virus type 2 subtype B (isolate UC1)</name>
    <name type="common">HIV-2</name>
    <dbReference type="NCBI Taxonomy" id="388822"/>
    <lineage>
        <taxon>Viruses</taxon>
        <taxon>Riboviria</taxon>
        <taxon>Pararnavirae</taxon>
        <taxon>Artverviricota</taxon>
        <taxon>Revtraviricetes</taxon>
        <taxon>Ortervirales</taxon>
        <taxon>Retroviridae</taxon>
        <taxon>Orthoretrovirinae</taxon>
        <taxon>Lentivirus</taxon>
        <taxon>Human immunodeficiency virus 2</taxon>
    </lineage>
</organism>
<proteinExistence type="inferred from homology"/>
<comment type="function">
    <molecule>Gag polyprotein</molecule>
    <text evidence="5">Mediates, with Gag-Pol polyprotein, the essential events in virion assembly, including binding the plasma membrane, making the protein-protein interactions necessary to create spherical particles, recruiting the viral Env proteins, and packaging the genomic RNA via direct interactions with the RNA packaging sequence (Psi).</text>
</comment>
<comment type="function">
    <molecule>Matrix protein p17</molecule>
    <text evidence="1 6">Targets the polyprotein to the plasma membrane via a multipartite membrane-binding signal, that includes its myristoylated N-terminus (By similarity). Matrix protein is part of the pre-integration complex. Implicated in the release from host cell mediated by Vpu. Binds to RNA (By similarity).</text>
</comment>
<comment type="function">
    <molecule>Capsid protein p24</molecule>
    <text evidence="5 6 8">Forms the conical core that encapsulates the genomic RNA-nucleocapsid complex in the virion (By similarity). Most core are conical, with only 7% tubular (By similarity). The core is constituted by capsid protein hexamer subunits (By similarity). The core is disassembled soon after virion entry (By similarity). Host restriction factors such as TRIM5-alpha or TRIMCyp bind retroviral capsids and cause premature capsid disassembly, leading to blocks in reverse transcription (By similarity). Capsid restriction by TRIM5 is one of the factors which restricts HIV-1 to the human species (By similarity). Host PIN1 apparently facilitates the virion uncoating (By similarity). On the other hand, interactions with PDZD8 or CYPA stabilize the capsid (By similarity). The capsid interacts with high affinity with human NONO, promoting detection of viral DNA by CGAS, leading to CGAS-mediated inmmune activation (By similarity).</text>
</comment>
<comment type="function">
    <molecule>Nucleocapsid protein p7</molecule>
    <text evidence="5">Encapsulates and protects viral dimeric unspliced genomic RNA (gRNA). Binds these RNAs through its zinc fingers. Acts as a nucleic acid chaperone which is involved in rearangement of nucleic acid secondary structure during gRNA retrotranscription. Also facilitates template switch leading to recombination. As part of the polyprotein, participates in gRNA dimerization, packaging, tRNA incorporation and virion assembly.</text>
</comment>
<comment type="function">
    <molecule>p6-gag</molecule>
    <text evidence="6">Plays a role in budding of the assembled particle by interacting with the host class E VPS proteins TSG101 and PDCD6IP/AIP1.</text>
</comment>
<comment type="subunit">
    <molecule>Gag polyprotein</molecule>
    <text evidence="4 5">Homotrimer; further assembles as hexamers of trimers. Oligomerization possibly creates a central hole into which the cytoplasmic tail of the gp41 envelope protein may be inserted. Interacts with host TRIM22; this interaction seems to disrupt proper trafficking of Gag polyprotein and may interfere with budding. Interacts with host PDZD8. When ubiquitinated, interacts (via p6-gag domain) with host PACSIN2; this interaction allows PACSIN2 recruitment to viral assembly sites and its subsequent incorporation into virions (By similarity).</text>
</comment>
<comment type="subunit">
    <molecule>Matrix protein p17</molecule>
    <text evidence="5 6">Homotrimer; further assembles as hexamers of trimers. Interacts with gp41 (via C-terminus). Interacts with host CALM1; this interaction induces a conformational change in the Matrix protein, triggering exposure of the myristate group. Interacts with host AP3D1; this interaction allows the polyprotein trafficking to multivesicular bodies during virus assembly. Part of the pre-integration complex (PIC) which is composed of viral genome, matrix protein, Vpr and integrase.</text>
</comment>
<comment type="subunit">
    <molecule>Capsid protein p24</molecule>
    <text evidence="5 6 8">Homodimer; the homodimer further multimerizes as homohexamers or homopentamers (By similarity). Interacts with host NUP98 (By similarity). Interacts with host PPIA/CYPA; this interaction stabilizes the capsid (By similarity). Interacts with host NUP153 (By similarity). Interacts with host PDZD8; this interaction stabilizes the capsid. Interacts with host TRIM5; this interaction destabilizes the capsid (By similarity). Interacts with host CPSF6 (By similarity). Interacts with host NONO; the interaction is the interaction is strong and promotes CGAS-mediated immunity (By similarity).</text>
</comment>
<comment type="subunit">
    <molecule>Nucleocapsid protein p7</molecule>
    <text evidence="6">Interacts with host NUP98.</text>
</comment>
<comment type="subunit">
    <molecule>p6-gag</molecule>
    <text evidence="3 6">Interacts with Vpr; this interaction allows Vpr incorporation into the virion. Interacts with host TSG101. p6-gag interacts with host PDCD6IP/AIP1.</text>
</comment>
<comment type="subcellular location">
    <molecule>Gag polyprotein</molecule>
    <subcellularLocation>
        <location evidence="6">Host cell membrane</location>
        <topology evidence="6">Lipid-anchor</topology>
    </subcellularLocation>
    <subcellularLocation>
        <location evidence="6">Host endosome</location>
        <location evidence="6">Host multivesicular body</location>
    </subcellularLocation>
    <text evidence="6">These locations are probably linked to virus assembly sites. The main location is the cell membrane, but under some circumstances, late endosomal compartments can serve as productive sites for virion assembly.</text>
</comment>
<comment type="subcellular location">
    <molecule>Matrix protein p17</molecule>
    <subcellularLocation>
        <location evidence="6">Virion membrane</location>
        <topology evidence="6">Lipid-anchor</topology>
    </subcellularLocation>
    <subcellularLocation>
        <location evidence="1">Host nucleus</location>
    </subcellularLocation>
    <subcellularLocation>
        <location evidence="1">Host cytoplasm</location>
    </subcellularLocation>
</comment>
<comment type="subcellular location">
    <molecule>Capsid protein p24</molecule>
    <subcellularLocation>
        <location evidence="6">Virion</location>
    </subcellularLocation>
</comment>
<comment type="subcellular location">
    <molecule>Nucleocapsid protein p7</molecule>
    <subcellularLocation>
        <location evidence="6">Virion</location>
    </subcellularLocation>
</comment>
<comment type="alternative products">
    <event type="ribosomal frameshifting"/>
    <isoform>
        <id>Q76633-1</id>
        <name>Gag polyprotein</name>
        <sequence type="displayed"/>
    </isoform>
    <isoform>
        <id>Q76634-1</id>
        <name>Gag-Pol polyprotein</name>
        <sequence type="external"/>
    </isoform>
    <text>Translation results in the formation of the Gag polyprotein most of the time. Ribosomal frameshifting at the gag-pol genes boundary occurs at low frequency and produces the Gag-Pol polyprotein. This strategy of translation probably allows the virus to modulate the quantity of each viral protein. Maintenance of a correct Gag to Gag-Pol ratio is essential for RNA dimerization and viral infectivity.</text>
</comment>
<comment type="domain">
    <text evidence="1">Late-budding domains (L domains) are short sequence motifs essential for viral particle budding. They recruit proteins of the host ESCRT machinery (Endosomal Sorting Complex Required for Transport) or ESCRT-associated proteins. p6-gag contains one L domains: a PTAP/PSAP motif, which interacts with the UEV domain of TSG101 (By similarity).</text>
</comment>
<comment type="PTM">
    <text evidence="6">Gag-Pol polyprotein: Specific enzymatic cleavages by the viral protease yield mature proteins.</text>
</comment>
<comment type="PTM">
    <molecule>Matrix protein p17</molecule>
    <text evidence="5">Tyrosine phosphorylated presumably in the virion by a host kinase. Phosphorylation is apparently not a major regulator of membrane association.</text>
</comment>
<comment type="PTM">
    <text evidence="6">Capsid protein p24 is phosphorylated possibly by host MAPK1; this phosphorylation is necessary for Pin1-mediated virion uncoating.</text>
</comment>
<comment type="PTM">
    <text evidence="2">Nucleocapsid protein p7 is methylated by host PRMT6, impairing its function by reducing RNA annealing and the initiation of reverse transcription.</text>
</comment>
<comment type="miscellaneous">
    <molecule>Isoform Gag polyprotein</molecule>
    <text>Produced by conventional translation.</text>
</comment>
<comment type="similarity">
    <text evidence="11">Belongs to the primate lentivirus group gag polyprotein family.</text>
</comment>
<keyword id="KW-0014">AIDS</keyword>
<keyword id="KW-0167">Capsid protein</keyword>
<keyword id="KW-1032">Host cell membrane</keyword>
<keyword id="KW-1035">Host cytoplasm</keyword>
<keyword id="KW-1039">Host endosome</keyword>
<keyword id="KW-1043">Host membrane</keyword>
<keyword id="KW-1048">Host nucleus</keyword>
<keyword id="KW-0945">Host-virus interaction</keyword>
<keyword id="KW-0449">Lipoprotein</keyword>
<keyword id="KW-0472">Membrane</keyword>
<keyword id="KW-0479">Metal-binding</keyword>
<keyword id="KW-0519">Myristate</keyword>
<keyword id="KW-0597">Phosphoprotein</keyword>
<keyword id="KW-0677">Repeat</keyword>
<keyword id="KW-0688">Ribosomal frameshifting</keyword>
<keyword id="KW-0694">RNA-binding</keyword>
<keyword id="KW-1198">Viral budding</keyword>
<keyword id="KW-1187">Viral budding via the host ESCRT complexes</keyword>
<keyword id="KW-0543">Viral nucleoprotein</keyword>
<keyword id="KW-1188">Viral release from host cell</keyword>
<keyword id="KW-0946">Virion</keyword>
<keyword id="KW-0862">Zinc</keyword>
<keyword id="KW-0863">Zinc-finger</keyword>
<gene>
    <name type="primary">gag</name>
</gene>
<sequence>MGARSSVLSGKKTDELEKVRLRPGGKKRYCLKHIIWAVNELDRFGLAESLLESKEGCHKILTVLAPLVPTGSENLKSLFNTVCVIYCLHAEEKVKDTEEAKKIAQRHLAADTEKMPATSRPTAPPSGGNYPVQQIAGNYVHMPLSPRTLNAWVKLVEEKKFGAEVVPGFQALSEGCTPYDINQMLNCVGDHQAAMQIIREIINEEAADWDQQHPIPGPLPAGQLRDPRGSDIAGTTSTVEEQIQWMYRAQNPVPVGNIYRRWIQIGLQKCVRMYNPTNILDIKQGPKEPFQSYVDRFYKSLRAEQTDPAVKNWMTQTLLIQNANPDCKLVLKGLGMNPTLEEMLTACQGIGGPGQKARLMAEALKEALTPAPIPFAAAQQKAGKRGTVTCWNCGKVGHTAKQCRAPRRQGCWKCGKQGHIMSKCPERQAGFLGLGPWGKKPRNFPMTQVPQGVTPSAPPMDPAEGMTPRGATPSAPPADPAVEMLKSYMKMGRQQRESRERPYKEVTEDLLHLNSLFGEDQ</sequence>